<gene>
    <name type="primary">galR</name>
    <name type="ordered locus">b2837</name>
    <name type="ordered locus">JW2805</name>
</gene>
<evidence type="ECO:0000255" key="1">
    <source>
        <dbReference type="PROSITE-ProRule" id="PRU00111"/>
    </source>
</evidence>
<name>GALR_ECOLI</name>
<comment type="function">
    <text>Repressor of the galactose operon. Binds galactose as an inducer.</text>
</comment>
<comment type="pathway">
    <text>Carbohydrate metabolism; galactose metabolism [regulation].</text>
</comment>
<comment type="subunit">
    <text>Homodimer.</text>
</comment>
<comment type="interaction">
    <interactant intactId="EBI-556902">
        <id>P03024</id>
    </interactant>
    <interactant intactId="EBI-556902">
        <id>P03024</id>
        <label>galR</label>
    </interactant>
    <organismsDiffer>false</organismsDiffer>
    <experiments>3</experiments>
</comment>
<comment type="interaction">
    <interactant intactId="EBI-556902">
        <id>P03024</id>
    </interactant>
    <interactant intactId="EBI-1117006">
        <id>P25748</id>
        <label>galS</label>
    </interactant>
    <organismsDiffer>false</organismsDiffer>
    <experiments>5</experiments>
</comment>
<sequence>MATIKDVARLAGVSVATVSRVINNSPKASEASRLAVHSAMESLSYHPNANARALAQQTTETVGLVVGDVSDPFFGAMVKAVEQVAYHTGNFLLIGNGYHNEQKERQAIEQLIRHRCAALVVHAKMIPDADLASLMKQMPGMVLINRILPGFENRCIALDDRYGAWLATRHLIQQGHTRIGYLCSNHSISDAEDRLQGYYDALAESGIAANDRLVTFGEPDESGGEQAMTELLGRGRNFTAVACYNDSMAAGAMGVLNDNGIDVPGEISLIGFDDVLVSRYVRPRLTTVRYPIVTMATQAAELALALADNRPLPEITNVFSPTLVRRHSVSTPSLEASHHATSD</sequence>
<protein>
    <recommendedName>
        <fullName>HTH-type transcriptional regulator GalR</fullName>
    </recommendedName>
    <alternativeName>
        <fullName>Galactose operon repressor</fullName>
    </alternativeName>
</protein>
<feature type="chain" id="PRO_0000107951" description="HTH-type transcriptional regulator GalR">
    <location>
        <begin position="1"/>
        <end position="343"/>
    </location>
</feature>
<feature type="domain" description="HTH lacI-type" evidence="1">
    <location>
        <begin position="1"/>
        <end position="56"/>
    </location>
</feature>
<feature type="DNA-binding region" description="H-T-H motif" evidence="1">
    <location>
        <begin position="4"/>
        <end position="23"/>
    </location>
</feature>
<organism>
    <name type="scientific">Escherichia coli (strain K12)</name>
    <dbReference type="NCBI Taxonomy" id="83333"/>
    <lineage>
        <taxon>Bacteria</taxon>
        <taxon>Pseudomonadati</taxon>
        <taxon>Pseudomonadota</taxon>
        <taxon>Gammaproteobacteria</taxon>
        <taxon>Enterobacterales</taxon>
        <taxon>Enterobacteriaceae</taxon>
        <taxon>Escherichia</taxon>
    </lineage>
</organism>
<proteinExistence type="evidence at protein level"/>
<accession>P03024</accession>
<accession>Q2MA00</accession>
<dbReference type="EMBL" id="V00280">
    <property type="protein sequence ID" value="CAA23543.1"/>
    <property type="molecule type" value="Genomic_DNA"/>
</dbReference>
<dbReference type="EMBL" id="U29581">
    <property type="protein sequence ID" value="AAB40484.1"/>
    <property type="molecule type" value="Genomic_DNA"/>
</dbReference>
<dbReference type="EMBL" id="U00096">
    <property type="protein sequence ID" value="AAC75876.1"/>
    <property type="molecule type" value="Genomic_DNA"/>
</dbReference>
<dbReference type="EMBL" id="AP009048">
    <property type="protein sequence ID" value="BAE76906.1"/>
    <property type="molecule type" value="Genomic_DNA"/>
</dbReference>
<dbReference type="EMBL" id="J01614">
    <property type="protein sequence ID" value="AAA83860.1"/>
    <property type="molecule type" value="Genomic_DNA"/>
</dbReference>
<dbReference type="PIR" id="A93910">
    <property type="entry name" value="RPECG"/>
</dbReference>
<dbReference type="RefSeq" id="NP_417314.1">
    <property type="nucleotide sequence ID" value="NC_000913.3"/>
</dbReference>
<dbReference type="RefSeq" id="WP_000201063.1">
    <property type="nucleotide sequence ID" value="NZ_SSZK01000003.1"/>
</dbReference>
<dbReference type="SMR" id="P03024"/>
<dbReference type="BioGRID" id="4262964">
    <property type="interactions" value="152"/>
</dbReference>
<dbReference type="BioGRID" id="851641">
    <property type="interactions" value="2"/>
</dbReference>
<dbReference type="DIP" id="DIP-9733N"/>
<dbReference type="FunCoup" id="P03024">
    <property type="interactions" value="247"/>
</dbReference>
<dbReference type="IntAct" id="P03024">
    <property type="interactions" value="3"/>
</dbReference>
<dbReference type="STRING" id="511145.b2837"/>
<dbReference type="jPOST" id="P03024"/>
<dbReference type="PaxDb" id="511145-b2837"/>
<dbReference type="EnsemblBacteria" id="AAC75876">
    <property type="protein sequence ID" value="AAC75876"/>
    <property type="gene ID" value="b2837"/>
</dbReference>
<dbReference type="GeneID" id="93779159"/>
<dbReference type="GeneID" id="947314"/>
<dbReference type="KEGG" id="ecj:JW2805"/>
<dbReference type="KEGG" id="eco:b2837"/>
<dbReference type="KEGG" id="ecoc:C3026_15580"/>
<dbReference type="PATRIC" id="fig|1411691.4.peg.3897"/>
<dbReference type="EchoBASE" id="EB0359"/>
<dbReference type="eggNOG" id="COG1609">
    <property type="taxonomic scope" value="Bacteria"/>
</dbReference>
<dbReference type="HOGENOM" id="CLU_037628_6_0_6"/>
<dbReference type="InParanoid" id="P03024"/>
<dbReference type="OMA" id="HSEFVFM"/>
<dbReference type="OrthoDB" id="9798934at2"/>
<dbReference type="PhylomeDB" id="P03024"/>
<dbReference type="BioCyc" id="EcoCyc:PD03028"/>
<dbReference type="UniPathway" id="UPA00214"/>
<dbReference type="PRO" id="PR:P03024"/>
<dbReference type="Proteomes" id="UP000000625">
    <property type="component" value="Chromosome"/>
</dbReference>
<dbReference type="GO" id="GO:0003677">
    <property type="term" value="F:DNA binding"/>
    <property type="evidence" value="ECO:0000314"/>
    <property type="project" value="EcoCyc"/>
</dbReference>
<dbReference type="GO" id="GO:0003700">
    <property type="term" value="F:DNA-binding transcription factor activity"/>
    <property type="evidence" value="ECO:0000318"/>
    <property type="project" value="GO_Central"/>
</dbReference>
<dbReference type="GO" id="GO:0042802">
    <property type="term" value="F:identical protein binding"/>
    <property type="evidence" value="ECO:0000353"/>
    <property type="project" value="IntAct"/>
</dbReference>
<dbReference type="GO" id="GO:0000976">
    <property type="term" value="F:transcription cis-regulatory region binding"/>
    <property type="evidence" value="ECO:0000318"/>
    <property type="project" value="GO_Central"/>
</dbReference>
<dbReference type="GO" id="GO:0006351">
    <property type="term" value="P:DNA-templated transcription"/>
    <property type="evidence" value="ECO:0000314"/>
    <property type="project" value="EcoCyc"/>
</dbReference>
<dbReference type="GO" id="GO:0006012">
    <property type="term" value="P:galactose metabolic process"/>
    <property type="evidence" value="ECO:0007669"/>
    <property type="project" value="UniProtKB-UniPathway"/>
</dbReference>
<dbReference type="GO" id="GO:0006355">
    <property type="term" value="P:regulation of DNA-templated transcription"/>
    <property type="evidence" value="ECO:0000314"/>
    <property type="project" value="EcoCyc"/>
</dbReference>
<dbReference type="CDD" id="cd01392">
    <property type="entry name" value="HTH_LacI"/>
    <property type="match status" value="1"/>
</dbReference>
<dbReference type="CDD" id="cd06270">
    <property type="entry name" value="PBP1_GalS-like"/>
    <property type="match status" value="1"/>
</dbReference>
<dbReference type="FunFam" id="3.40.50.2300:FF:000027">
    <property type="entry name" value="HTH-type transcriptional regulator GalR"/>
    <property type="match status" value="1"/>
</dbReference>
<dbReference type="FunFam" id="3.40.50.2300:FF:000048">
    <property type="entry name" value="HTH-type transcriptional regulator GalR"/>
    <property type="match status" value="1"/>
</dbReference>
<dbReference type="FunFam" id="1.10.260.40:FF:000002">
    <property type="entry name" value="HTH-type transcriptional repressor PurR"/>
    <property type="match status" value="1"/>
</dbReference>
<dbReference type="Gene3D" id="3.40.50.2300">
    <property type="match status" value="2"/>
</dbReference>
<dbReference type="Gene3D" id="1.10.260.40">
    <property type="entry name" value="lambda repressor-like DNA-binding domains"/>
    <property type="match status" value="1"/>
</dbReference>
<dbReference type="InterPro" id="IPR000843">
    <property type="entry name" value="HTH_LacI"/>
</dbReference>
<dbReference type="InterPro" id="IPR046335">
    <property type="entry name" value="LacI/GalR-like_sensor"/>
</dbReference>
<dbReference type="InterPro" id="IPR010982">
    <property type="entry name" value="Lambda_DNA-bd_dom_sf"/>
</dbReference>
<dbReference type="InterPro" id="IPR028082">
    <property type="entry name" value="Peripla_BP_I"/>
</dbReference>
<dbReference type="NCBIfam" id="NF008002">
    <property type="entry name" value="PRK10727.1"/>
    <property type="match status" value="1"/>
</dbReference>
<dbReference type="PANTHER" id="PTHR30146:SF98">
    <property type="entry name" value="HTH-TYPE TRANSCRIPTIONAL REGULATOR GALR"/>
    <property type="match status" value="1"/>
</dbReference>
<dbReference type="PANTHER" id="PTHR30146">
    <property type="entry name" value="LACI-RELATED TRANSCRIPTIONAL REPRESSOR"/>
    <property type="match status" value="1"/>
</dbReference>
<dbReference type="Pfam" id="PF00356">
    <property type="entry name" value="LacI"/>
    <property type="match status" value="1"/>
</dbReference>
<dbReference type="Pfam" id="PF13377">
    <property type="entry name" value="Peripla_BP_3"/>
    <property type="match status" value="1"/>
</dbReference>
<dbReference type="PRINTS" id="PR00036">
    <property type="entry name" value="HTHLACI"/>
</dbReference>
<dbReference type="SMART" id="SM00354">
    <property type="entry name" value="HTH_LACI"/>
    <property type="match status" value="1"/>
</dbReference>
<dbReference type="SUPFAM" id="SSF47413">
    <property type="entry name" value="lambda repressor-like DNA-binding domains"/>
    <property type="match status" value="1"/>
</dbReference>
<dbReference type="SUPFAM" id="SSF53822">
    <property type="entry name" value="Periplasmic binding protein-like I"/>
    <property type="match status" value="1"/>
</dbReference>
<dbReference type="PROSITE" id="PS00356">
    <property type="entry name" value="HTH_LACI_1"/>
    <property type="match status" value="1"/>
</dbReference>
<dbReference type="PROSITE" id="PS50932">
    <property type="entry name" value="HTH_LACI_2"/>
    <property type="match status" value="1"/>
</dbReference>
<reference key="1">
    <citation type="journal article" date="1982" name="Proc. Natl. Acad. Sci. U.S.A.">
        <title>Sequence of galR gene indicates a common evolutionary origin of lac and gal repressor in Escherichia coli.</title>
        <authorList>
            <person name="von Wilcken-Bergmann B."/>
            <person name="Mueller-Hill B."/>
        </authorList>
    </citation>
    <scope>NUCLEOTIDE SEQUENCE [GENOMIC DNA]</scope>
</reference>
<reference key="2">
    <citation type="journal article" date="1997" name="Science">
        <title>The complete genome sequence of Escherichia coli K-12.</title>
        <authorList>
            <person name="Blattner F.R."/>
            <person name="Plunkett G. III"/>
            <person name="Bloch C.A."/>
            <person name="Perna N.T."/>
            <person name="Burland V."/>
            <person name="Riley M."/>
            <person name="Collado-Vides J."/>
            <person name="Glasner J.D."/>
            <person name="Rode C.K."/>
            <person name="Mayhew G.F."/>
            <person name="Gregor J."/>
            <person name="Davis N.W."/>
            <person name="Kirkpatrick H.A."/>
            <person name="Goeden M.A."/>
            <person name="Rose D.J."/>
            <person name="Mau B."/>
            <person name="Shao Y."/>
        </authorList>
    </citation>
    <scope>NUCLEOTIDE SEQUENCE [LARGE SCALE GENOMIC DNA]</scope>
    <source>
        <strain>K12 / MG1655 / ATCC 47076</strain>
    </source>
</reference>
<reference key="3">
    <citation type="journal article" date="2006" name="Mol. Syst. Biol.">
        <title>Highly accurate genome sequences of Escherichia coli K-12 strains MG1655 and W3110.</title>
        <authorList>
            <person name="Hayashi K."/>
            <person name="Morooka N."/>
            <person name="Yamamoto Y."/>
            <person name="Fujita K."/>
            <person name="Isono K."/>
            <person name="Choi S."/>
            <person name="Ohtsubo E."/>
            <person name="Baba T."/>
            <person name="Wanner B.L."/>
            <person name="Mori H."/>
            <person name="Horiuchi T."/>
        </authorList>
    </citation>
    <scope>NUCLEOTIDE SEQUENCE [LARGE SCALE GENOMIC DNA]</scope>
    <source>
        <strain>K12 / W3110 / ATCC 27325 / DSM 5911</strain>
    </source>
</reference>
<reference key="4">
    <citation type="journal article" date="1983" name="J. Mol. Biol.">
        <title>Regulation of diaminopimelate decarboxylase synthesis in Escherichia coli. II. Nucleotide sequence of the lysA gene and its regulatory region.</title>
        <authorList>
            <person name="Stragier P."/>
            <person name="Danos O."/>
            <person name="Patte J.-C."/>
        </authorList>
    </citation>
    <scope>NUCLEOTIDE SEQUENCE [GENOMIC DNA] OF 31-343</scope>
</reference>
<reference key="5">
    <citation type="journal article" date="1994" name="J. Biol. Chem.">
        <title>A molecular model of the inducer binding domain of the galactose repressor of Escherichia coli.</title>
        <authorList>
            <person name="Hsieh M."/>
            <person name="Hensely P."/>
            <person name="Brenowitz M."/>
            <person name="Fetrow J.S."/>
        </authorList>
    </citation>
    <scope>3D-STRUCTURE MODELING OF 58-343</scope>
</reference>
<reference key="6">
    <citation type="journal article" date="1997" name="J. Bacteriol.">
        <title>Functional characterization of roles of GalR and GalS as regulators of the gal regulon.</title>
        <authorList>
            <person name="Geanacopoulos M."/>
            <person name="Adhya S."/>
        </authorList>
    </citation>
    <scope>CHARACTERIZATION</scope>
</reference>
<keyword id="KW-0119">Carbohydrate metabolism</keyword>
<keyword id="KW-0238">DNA-binding</keyword>
<keyword id="KW-0299">Galactose metabolism</keyword>
<keyword id="KW-1185">Reference proteome</keyword>
<keyword id="KW-0678">Repressor</keyword>
<keyword id="KW-0804">Transcription</keyword>
<keyword id="KW-0805">Transcription regulation</keyword>